<protein>
    <recommendedName>
        <fullName evidence="7">Ras-like protein B</fullName>
        <ecNumber evidence="1">3.6.5.2</ecNumber>
    </recommendedName>
</protein>
<sequence length="239" mass="26488">MTLYKLVVLGDGGVGKTALTIQLCLNHFVETYDPTIEDSYRKQVVIDQQSCMLEVLDTAGQEEYTALRDQWIRDGEGFVLVYSITSRASFTRIQKFYNQIKMVKESAHSGSPSGASYLGSPMNAPSGPPLPVPVMLVGNKSDKAVERAVSAQEGQALAKDLGCEFVEASAKNCINVEKAFYDVVRMLRQQRQQQQGGRAQDRRPTGLGPMRDRDAGPEYPKTFRPDRARHRGGIKCVIL</sequence>
<dbReference type="EC" id="3.6.5.2" evidence="1"/>
<dbReference type="EMBL" id="AAHF01000001">
    <property type="protein sequence ID" value="EAL93074.1"/>
    <property type="molecule type" value="Genomic_DNA"/>
</dbReference>
<dbReference type="RefSeq" id="XP_755112.1">
    <property type="nucleotide sequence ID" value="XM_750019.1"/>
</dbReference>
<dbReference type="SMR" id="Q4X241"/>
<dbReference type="STRING" id="330879.Q4X241"/>
<dbReference type="EnsemblFungi" id="EAL93074">
    <property type="protein sequence ID" value="EAL93074"/>
    <property type="gene ID" value="AFUA_2G07770"/>
</dbReference>
<dbReference type="GeneID" id="3513137"/>
<dbReference type="KEGG" id="afm:AFUA_2G07770"/>
<dbReference type="VEuPathDB" id="FungiDB:Afu2g07770"/>
<dbReference type="eggNOG" id="KOG0395">
    <property type="taxonomic scope" value="Eukaryota"/>
</dbReference>
<dbReference type="HOGENOM" id="CLU_041217_9_8_1"/>
<dbReference type="InParanoid" id="Q4X241"/>
<dbReference type="OMA" id="CEFTEAS"/>
<dbReference type="OrthoDB" id="5976022at2759"/>
<dbReference type="Proteomes" id="UP000002530">
    <property type="component" value="Chromosome 2"/>
</dbReference>
<dbReference type="GO" id="GO:0005886">
    <property type="term" value="C:plasma membrane"/>
    <property type="evidence" value="ECO:0000318"/>
    <property type="project" value="GO_Central"/>
</dbReference>
<dbReference type="GO" id="GO:0019003">
    <property type="term" value="F:GDP binding"/>
    <property type="evidence" value="ECO:0000318"/>
    <property type="project" value="GO_Central"/>
</dbReference>
<dbReference type="GO" id="GO:0005525">
    <property type="term" value="F:GTP binding"/>
    <property type="evidence" value="ECO:0000318"/>
    <property type="project" value="GO_Central"/>
</dbReference>
<dbReference type="GO" id="GO:0003924">
    <property type="term" value="F:GTPase activity"/>
    <property type="evidence" value="ECO:0000318"/>
    <property type="project" value="GO_Central"/>
</dbReference>
<dbReference type="GO" id="GO:0030448">
    <property type="term" value="P:hyphal growth"/>
    <property type="evidence" value="ECO:0000315"/>
    <property type="project" value="AspGD"/>
</dbReference>
<dbReference type="GO" id="GO:0007165">
    <property type="term" value="P:signal transduction"/>
    <property type="evidence" value="ECO:0007669"/>
    <property type="project" value="InterPro"/>
</dbReference>
<dbReference type="FunFam" id="3.40.50.300:FF:000654">
    <property type="entry name" value="Small g-protein ras2"/>
    <property type="match status" value="1"/>
</dbReference>
<dbReference type="Gene3D" id="3.40.50.300">
    <property type="entry name" value="P-loop containing nucleotide triphosphate hydrolases"/>
    <property type="match status" value="1"/>
</dbReference>
<dbReference type="InterPro" id="IPR027417">
    <property type="entry name" value="P-loop_NTPase"/>
</dbReference>
<dbReference type="InterPro" id="IPR005225">
    <property type="entry name" value="Small_GTP-bd"/>
</dbReference>
<dbReference type="InterPro" id="IPR001806">
    <property type="entry name" value="Small_GTPase"/>
</dbReference>
<dbReference type="InterPro" id="IPR020849">
    <property type="entry name" value="Small_GTPase_Ras-type"/>
</dbReference>
<dbReference type="NCBIfam" id="TIGR00231">
    <property type="entry name" value="small_GTP"/>
    <property type="match status" value="1"/>
</dbReference>
<dbReference type="PANTHER" id="PTHR24070">
    <property type="entry name" value="RAS, DI-RAS, AND RHEB FAMILY MEMBERS OF SMALL GTPASE SUPERFAMILY"/>
    <property type="match status" value="1"/>
</dbReference>
<dbReference type="Pfam" id="PF00071">
    <property type="entry name" value="Ras"/>
    <property type="match status" value="2"/>
</dbReference>
<dbReference type="PRINTS" id="PR00449">
    <property type="entry name" value="RASTRNSFRMNG"/>
</dbReference>
<dbReference type="SMART" id="SM00175">
    <property type="entry name" value="RAB"/>
    <property type="match status" value="1"/>
</dbReference>
<dbReference type="SMART" id="SM00173">
    <property type="entry name" value="RAS"/>
    <property type="match status" value="1"/>
</dbReference>
<dbReference type="SMART" id="SM00174">
    <property type="entry name" value="RHO"/>
    <property type="match status" value="1"/>
</dbReference>
<dbReference type="SUPFAM" id="SSF52540">
    <property type="entry name" value="P-loop containing nucleoside triphosphate hydrolases"/>
    <property type="match status" value="1"/>
</dbReference>
<dbReference type="PROSITE" id="PS51421">
    <property type="entry name" value="RAS"/>
    <property type="match status" value="1"/>
</dbReference>
<feature type="chain" id="PRO_0000460474" description="Ras-like protein B">
    <location>
        <begin position="1"/>
        <end position="239"/>
    </location>
</feature>
<feature type="region of interest" description="Disordered" evidence="2">
    <location>
        <begin position="191"/>
        <end position="227"/>
    </location>
</feature>
<feature type="short sequence motif" description="Effector region" evidence="1">
    <location>
        <begin position="32"/>
        <end position="40"/>
    </location>
</feature>
<feature type="compositionally biased region" description="Basic and acidic residues" evidence="2">
    <location>
        <begin position="199"/>
        <end position="226"/>
    </location>
</feature>
<feature type="binding site" evidence="1">
    <location>
        <begin position="13"/>
        <end position="18"/>
    </location>
    <ligand>
        <name>GTP</name>
        <dbReference type="ChEBI" id="CHEBI:37565"/>
    </ligand>
</feature>
<feature type="binding site" evidence="1">
    <location>
        <begin position="29"/>
        <end position="35"/>
    </location>
    <ligand>
        <name>GTP</name>
        <dbReference type="ChEBI" id="CHEBI:37565"/>
    </ligand>
</feature>
<feature type="binding site" evidence="1">
    <location>
        <begin position="59"/>
        <end position="60"/>
    </location>
    <ligand>
        <name>GTP</name>
        <dbReference type="ChEBI" id="CHEBI:37565"/>
    </ligand>
</feature>
<feature type="binding site" evidence="1">
    <location>
        <begin position="139"/>
        <end position="142"/>
    </location>
    <ligand>
        <name>GTP</name>
        <dbReference type="ChEBI" id="CHEBI:37565"/>
    </ligand>
</feature>
<feature type="binding site" evidence="1">
    <location>
        <begin position="169"/>
        <end position="171"/>
    </location>
    <ligand>
        <name>GTP</name>
        <dbReference type="ChEBI" id="CHEBI:37565"/>
    </ligand>
</feature>
<feature type="mutagenesis site" description="Dominant active mutation that leads to reduced conidiation." evidence="3">
    <original>G</original>
    <variation>V</variation>
    <location>
        <position position="12"/>
    </location>
</feature>
<feature type="mutagenesis site" description="Dominant negative mutation that slightly delays the initiation of germination and causes the development of conidiophores." evidence="3">
    <original>T</original>
    <variation>N</variation>
    <location>
        <position position="17"/>
    </location>
</feature>
<organism>
    <name type="scientific">Aspergillus fumigatus (strain ATCC MYA-4609 / CBS 101355 / FGSC A1100 / Af293)</name>
    <name type="common">Neosartorya fumigata</name>
    <dbReference type="NCBI Taxonomy" id="330879"/>
    <lineage>
        <taxon>Eukaryota</taxon>
        <taxon>Fungi</taxon>
        <taxon>Dikarya</taxon>
        <taxon>Ascomycota</taxon>
        <taxon>Pezizomycotina</taxon>
        <taxon>Eurotiomycetes</taxon>
        <taxon>Eurotiomycetidae</taxon>
        <taxon>Eurotiales</taxon>
        <taxon>Aspergillaceae</taxon>
        <taxon>Aspergillus</taxon>
        <taxon>Aspergillus subgen. Fumigati</taxon>
    </lineage>
</organism>
<gene>
    <name evidence="7" type="primary">rasB</name>
    <name type="ORF">AFUA_2G07770</name>
</gene>
<evidence type="ECO:0000250" key="1">
    <source>
        <dbReference type="UniProtKB" id="P01112"/>
    </source>
</evidence>
<evidence type="ECO:0000256" key="2">
    <source>
        <dbReference type="SAM" id="MobiDB-lite"/>
    </source>
</evidence>
<evidence type="ECO:0000269" key="3">
    <source>
    </source>
</evidence>
<evidence type="ECO:0000269" key="4">
    <source>
    </source>
</evidence>
<evidence type="ECO:0000269" key="5">
    <source>
    </source>
</evidence>
<evidence type="ECO:0000269" key="6">
    <source>
    </source>
</evidence>
<evidence type="ECO:0000303" key="7">
    <source>
    </source>
</evidence>
<evidence type="ECO:0000305" key="8"/>
<name>RASB_ASPFU</name>
<proteinExistence type="evidence at protein level"/>
<accession>Q4X241</accession>
<reference key="1">
    <citation type="journal article" date="2005" name="Nature">
        <title>Genomic sequence of the pathogenic and allergenic filamentous fungus Aspergillus fumigatus.</title>
        <authorList>
            <person name="Nierman W.C."/>
            <person name="Pain A."/>
            <person name="Anderson M.J."/>
            <person name="Wortman J.R."/>
            <person name="Kim H.S."/>
            <person name="Arroyo J."/>
            <person name="Berriman M."/>
            <person name="Abe K."/>
            <person name="Archer D.B."/>
            <person name="Bermejo C."/>
            <person name="Bennett J.W."/>
            <person name="Bowyer P."/>
            <person name="Chen D."/>
            <person name="Collins M."/>
            <person name="Coulsen R."/>
            <person name="Davies R."/>
            <person name="Dyer P.S."/>
            <person name="Farman M.L."/>
            <person name="Fedorova N."/>
            <person name="Fedorova N.D."/>
            <person name="Feldblyum T.V."/>
            <person name="Fischer R."/>
            <person name="Fosker N."/>
            <person name="Fraser A."/>
            <person name="Garcia J.L."/>
            <person name="Garcia M.J."/>
            <person name="Goble A."/>
            <person name="Goldman G.H."/>
            <person name="Gomi K."/>
            <person name="Griffith-Jones S."/>
            <person name="Gwilliam R."/>
            <person name="Haas B.J."/>
            <person name="Haas H."/>
            <person name="Harris D.E."/>
            <person name="Horiuchi H."/>
            <person name="Huang J."/>
            <person name="Humphray S."/>
            <person name="Jimenez J."/>
            <person name="Keller N."/>
            <person name="Khouri H."/>
            <person name="Kitamoto K."/>
            <person name="Kobayashi T."/>
            <person name="Konzack S."/>
            <person name="Kulkarni R."/>
            <person name="Kumagai T."/>
            <person name="Lafton A."/>
            <person name="Latge J.-P."/>
            <person name="Li W."/>
            <person name="Lord A."/>
            <person name="Lu C."/>
            <person name="Majoros W.H."/>
            <person name="May G.S."/>
            <person name="Miller B.L."/>
            <person name="Mohamoud Y."/>
            <person name="Molina M."/>
            <person name="Monod M."/>
            <person name="Mouyna I."/>
            <person name="Mulligan S."/>
            <person name="Murphy L.D."/>
            <person name="O'Neil S."/>
            <person name="Paulsen I."/>
            <person name="Penalva M.A."/>
            <person name="Pertea M."/>
            <person name="Price C."/>
            <person name="Pritchard B.L."/>
            <person name="Quail M.A."/>
            <person name="Rabbinowitsch E."/>
            <person name="Rawlins N."/>
            <person name="Rajandream M.A."/>
            <person name="Reichard U."/>
            <person name="Renauld H."/>
            <person name="Robson G.D."/>
            <person name="Rodriguez de Cordoba S."/>
            <person name="Rodriguez-Pena J.M."/>
            <person name="Ronning C.M."/>
            <person name="Rutter S."/>
            <person name="Salzberg S.L."/>
            <person name="Sanchez M."/>
            <person name="Sanchez-Ferrero J.C."/>
            <person name="Saunders D."/>
            <person name="Seeger K."/>
            <person name="Squares R."/>
            <person name="Squares S."/>
            <person name="Takeuchi M."/>
            <person name="Tekaia F."/>
            <person name="Turner G."/>
            <person name="Vazquez de Aldana C.R."/>
            <person name="Weidman J."/>
            <person name="White O."/>
            <person name="Woodward J.R."/>
            <person name="Yu J.-H."/>
            <person name="Fraser C.M."/>
            <person name="Galagan J.E."/>
            <person name="Asai K."/>
            <person name="Machida M."/>
            <person name="Hall N."/>
            <person name="Barrell B.G."/>
            <person name="Denning D.W."/>
        </authorList>
    </citation>
    <scope>NUCLEOTIDE SEQUENCE [LARGE SCALE GENOMIC DNA]</scope>
    <source>
        <strain>ATCC MYA-4609 / CBS 101355 / FGSC A1100 / Af293</strain>
    </source>
</reference>
<reference key="2">
    <citation type="journal article" date="2004" name="Fungal Genet. Biol.">
        <title>Aspergillus fumigatus rasA and rasB regulate the timing and morphology of asexual development.</title>
        <authorList>
            <person name="Fortwendel J.R."/>
            <person name="Panepinto J.C."/>
            <person name="Seitz A.E."/>
            <person name="Askew D.S."/>
            <person name="Rhodes J.C."/>
        </authorList>
    </citation>
    <scope>FUNCTION</scope>
    <scope>MUTAGENESIS OF GLY-12 AND THR-17</scope>
</reference>
<reference key="3">
    <citation type="journal article" date="2005" name="Eukaryot. Cell">
        <title>A fungus-specific ras homolog contributes to the hyphal growth and virulence of Aspergillus fumigatus.</title>
        <authorList>
            <person name="Fortwendel J.R."/>
            <person name="Zhao W."/>
            <person name="Bhabhra R."/>
            <person name="Park S."/>
            <person name="Perlin D.S."/>
            <person name="Askew D.S."/>
            <person name="Rhodes J.C."/>
        </authorList>
    </citation>
    <scope>FUNCTION</scope>
    <scope>DISRUPTION PHENOTYPE</scope>
    <scope>DOMAIN</scope>
</reference>
<reference key="4">
    <citation type="journal article" date="2019" name="Cell. Microbiol.">
        <title>SH3-class Ras guanine nucleotide exchange factors are essential for Aspergillus fumigatus invasive growth.</title>
        <authorList>
            <person name="Martin-Vicente A."/>
            <person name="Souza A.C.O."/>
            <person name="Al Abdallah Q."/>
            <person name="Ge W."/>
            <person name="Fortwendel J.R."/>
        </authorList>
    </citation>
    <scope>FUNCTION</scope>
    <scope>DISRUPTION PHENOTYPE</scope>
</reference>
<reference key="5">
    <citation type="journal article" date="2020" name="Appl. Environ. Microbiol.">
        <title>The cell wall integrity pathway contributes to the early stages of Aspergillus fumigatus asexual development.</title>
        <authorList>
            <person name="Rocha M.C."/>
            <person name="Fabri J.H.T.M."/>
            <person name="Simoes I.T."/>
            <person name="Silva-Rocha R."/>
            <person name="Hagiwara D."/>
            <person name="da Cunha A.F."/>
            <person name="Goldman G.H."/>
            <person name="Canovas D."/>
            <person name="Malavazi I."/>
        </authorList>
    </citation>
    <scope>FUNCTION</scope>
    <scope>INDUCTION</scope>
    <scope>INTERACTION WITH MPKA</scope>
</reference>
<keyword id="KW-0342">GTP-binding</keyword>
<keyword id="KW-0378">Hydrolase</keyword>
<keyword id="KW-0547">Nucleotide-binding</keyword>
<keyword id="KW-1185">Reference proteome</keyword>
<keyword id="KW-0843">Virulence</keyword>
<comment type="function">
    <text evidence="1 3 4 5 6">Ras-like protein involved in the activation of Ras protein signal transduction (By similarity). Ras proteins bind GDP/GTP and possess intrinsic GTPase activity (By similarity). Plays a role in hyphal morphology and conidiophore development (PubMed:14732259, PubMed:16339716, PubMed:30698898, PubMed:32005734). Required for full virulence (PubMed:16339716, PubMed:30698898).</text>
</comment>
<comment type="catalytic activity">
    <reaction evidence="1">
        <text>GTP + H2O = GDP + phosphate + H(+)</text>
        <dbReference type="Rhea" id="RHEA:19669"/>
        <dbReference type="ChEBI" id="CHEBI:15377"/>
        <dbReference type="ChEBI" id="CHEBI:15378"/>
        <dbReference type="ChEBI" id="CHEBI:37565"/>
        <dbReference type="ChEBI" id="CHEBI:43474"/>
        <dbReference type="ChEBI" id="CHEBI:58189"/>
        <dbReference type="EC" id="3.6.5.2"/>
    </reaction>
</comment>
<comment type="subunit">
    <text evidence="6">Interacts with mpkA.</text>
</comment>
<comment type="induction">
    <text evidence="6">Expression is regulated by the cell wall integrity pathway transcription factor rlmA that binds the 5'-YTAWWWWTAR-3' motif at the rasB promoter.</text>
</comment>
<comment type="domain">
    <text evidence="4">The conserved rasB internal amino acid insertion (residues 109 to 131) is required for the function.</text>
</comment>
<comment type="disruption phenotype">
    <text evidence="4 5">Causes decreased germination and growth rates on solid media but has no effect on total biomass accumulation (PubMed:16339716, PubMed:30698898). Leads to irregular hyphal morphology characterized by increased branching (PubMed:16339716). Also leads to decreased virulence (PubMed:16339716).</text>
</comment>
<comment type="similarity">
    <text evidence="8">Belongs to the small GTPase superfamily. Ras family.</text>
</comment>